<evidence type="ECO:0000255" key="1">
    <source>
        <dbReference type="HAMAP-Rule" id="MF_01606"/>
    </source>
</evidence>
<organism>
    <name type="scientific">Escherichia coli O45:K1 (strain S88 / ExPEC)</name>
    <dbReference type="NCBI Taxonomy" id="585035"/>
    <lineage>
        <taxon>Bacteria</taxon>
        <taxon>Pseudomonadati</taxon>
        <taxon>Pseudomonadota</taxon>
        <taxon>Gammaproteobacteria</taxon>
        <taxon>Enterobacterales</taxon>
        <taxon>Enterobacteriaceae</taxon>
        <taxon>Escherichia</taxon>
    </lineage>
</organism>
<dbReference type="EMBL" id="CU928161">
    <property type="protein sequence ID" value="CAR05952.1"/>
    <property type="molecule type" value="Genomic_DNA"/>
</dbReference>
<dbReference type="RefSeq" id="WP_000331456.1">
    <property type="nucleotide sequence ID" value="NC_011742.1"/>
</dbReference>
<dbReference type="SMR" id="B7MLM2"/>
<dbReference type="GeneID" id="93777612"/>
<dbReference type="KEGG" id="ecz:ECS88_4803"/>
<dbReference type="HOGENOM" id="CLU_076075_2_0_6"/>
<dbReference type="Proteomes" id="UP000000747">
    <property type="component" value="Chromosome"/>
</dbReference>
<dbReference type="GO" id="GO:0005737">
    <property type="term" value="C:cytoplasm"/>
    <property type="evidence" value="ECO:0007669"/>
    <property type="project" value="UniProtKB-SubCell"/>
</dbReference>
<dbReference type="GO" id="GO:0046872">
    <property type="term" value="F:metal ion binding"/>
    <property type="evidence" value="ECO:0007669"/>
    <property type="project" value="UniProtKB-KW"/>
</dbReference>
<dbReference type="GO" id="GO:0030091">
    <property type="term" value="P:protein repair"/>
    <property type="evidence" value="ECO:0007669"/>
    <property type="project" value="UniProtKB-UniRule"/>
</dbReference>
<dbReference type="GO" id="GO:0051409">
    <property type="term" value="P:response to nitrosative stress"/>
    <property type="evidence" value="ECO:0007669"/>
    <property type="project" value="UniProtKB-UniRule"/>
</dbReference>
<dbReference type="GO" id="GO:0006979">
    <property type="term" value="P:response to oxidative stress"/>
    <property type="evidence" value="ECO:0007669"/>
    <property type="project" value="UniProtKB-UniRule"/>
</dbReference>
<dbReference type="CDD" id="cd12108">
    <property type="entry name" value="Hr-like"/>
    <property type="match status" value="1"/>
</dbReference>
<dbReference type="FunFam" id="1.20.120.520:FF:000001">
    <property type="entry name" value="Iron-sulfur cluster repair protein YtfE"/>
    <property type="match status" value="1"/>
</dbReference>
<dbReference type="Gene3D" id="1.20.120.520">
    <property type="entry name" value="nmb1532 protein domain like"/>
    <property type="match status" value="1"/>
</dbReference>
<dbReference type="HAMAP" id="MF_01606">
    <property type="entry name" value="RIC_YtfE"/>
    <property type="match status" value="1"/>
</dbReference>
<dbReference type="InterPro" id="IPR023742">
    <property type="entry name" value="FeS-repair_YftE"/>
</dbReference>
<dbReference type="InterPro" id="IPR012312">
    <property type="entry name" value="Hemerythrin-like"/>
</dbReference>
<dbReference type="InterPro" id="IPR019903">
    <property type="entry name" value="RIC_family"/>
</dbReference>
<dbReference type="NCBIfam" id="TIGR03652">
    <property type="entry name" value="FeS_repair_RIC"/>
    <property type="match status" value="1"/>
</dbReference>
<dbReference type="NCBIfam" id="NF008221">
    <property type="entry name" value="PRK10992.1"/>
    <property type="match status" value="1"/>
</dbReference>
<dbReference type="PANTHER" id="PTHR36438">
    <property type="entry name" value="IRON-SULFUR CLUSTER REPAIR PROTEIN YTFE"/>
    <property type="match status" value="1"/>
</dbReference>
<dbReference type="PANTHER" id="PTHR36438:SF1">
    <property type="entry name" value="IRON-SULFUR CLUSTER REPAIR PROTEIN YTFE"/>
    <property type="match status" value="1"/>
</dbReference>
<dbReference type="Pfam" id="PF01814">
    <property type="entry name" value="Hemerythrin"/>
    <property type="match status" value="1"/>
</dbReference>
<dbReference type="Pfam" id="PF04405">
    <property type="entry name" value="ScdA_N"/>
    <property type="match status" value="1"/>
</dbReference>
<gene>
    <name evidence="1" type="primary">ytfE</name>
    <name type="ordered locus">ECS88_4803</name>
</gene>
<sequence>MAYRDQPLGELALSIPRASALFRKYDMDYCCGGKQTLARAAARKELDVEVIEAELAKLAEQPIEKDWRSAPLAEIIDHIIVRYHDRHREQLPELILQATKVERVHADKPSVPKGLTKYLTMLHEELSSHMMKEEQILFPMIKQGMGSQAMGPISVMESEHDEAGELLEVIKHTTNNVTPPPEACTTWKAMYNGINELIDDLMDHISLENNVLFPRALAGE</sequence>
<feature type="chain" id="PRO_1000148172" description="Iron-sulfur cluster repair protein YtfE">
    <location>
        <begin position="1"/>
        <end position="220"/>
    </location>
</feature>
<keyword id="KW-0963">Cytoplasm</keyword>
<keyword id="KW-0408">Iron</keyword>
<keyword id="KW-0479">Metal-binding</keyword>
<keyword id="KW-1185">Reference proteome</keyword>
<keyword id="KW-0346">Stress response</keyword>
<comment type="function">
    <text evidence="1">Di-iron-containing protein involved in the repair of iron-sulfur clusters damaged by oxidative and nitrosative stress conditions.</text>
</comment>
<comment type="subunit">
    <text evidence="1">Homodimer.</text>
</comment>
<comment type="subcellular location">
    <subcellularLocation>
        <location evidence="1">Cytoplasm</location>
    </subcellularLocation>
</comment>
<comment type="similarity">
    <text evidence="1">Belongs to the RIC family. YtfE subfamily.</text>
</comment>
<proteinExistence type="inferred from homology"/>
<name>YTFE_ECO45</name>
<protein>
    <recommendedName>
        <fullName evidence="1">Iron-sulfur cluster repair protein YtfE</fullName>
    </recommendedName>
</protein>
<reference key="1">
    <citation type="journal article" date="2009" name="PLoS Genet.">
        <title>Organised genome dynamics in the Escherichia coli species results in highly diverse adaptive paths.</title>
        <authorList>
            <person name="Touchon M."/>
            <person name="Hoede C."/>
            <person name="Tenaillon O."/>
            <person name="Barbe V."/>
            <person name="Baeriswyl S."/>
            <person name="Bidet P."/>
            <person name="Bingen E."/>
            <person name="Bonacorsi S."/>
            <person name="Bouchier C."/>
            <person name="Bouvet O."/>
            <person name="Calteau A."/>
            <person name="Chiapello H."/>
            <person name="Clermont O."/>
            <person name="Cruveiller S."/>
            <person name="Danchin A."/>
            <person name="Diard M."/>
            <person name="Dossat C."/>
            <person name="Karoui M.E."/>
            <person name="Frapy E."/>
            <person name="Garry L."/>
            <person name="Ghigo J.M."/>
            <person name="Gilles A.M."/>
            <person name="Johnson J."/>
            <person name="Le Bouguenec C."/>
            <person name="Lescat M."/>
            <person name="Mangenot S."/>
            <person name="Martinez-Jehanne V."/>
            <person name="Matic I."/>
            <person name="Nassif X."/>
            <person name="Oztas S."/>
            <person name="Petit M.A."/>
            <person name="Pichon C."/>
            <person name="Rouy Z."/>
            <person name="Ruf C.S."/>
            <person name="Schneider D."/>
            <person name="Tourret J."/>
            <person name="Vacherie B."/>
            <person name="Vallenet D."/>
            <person name="Medigue C."/>
            <person name="Rocha E.P.C."/>
            <person name="Denamur E."/>
        </authorList>
    </citation>
    <scope>NUCLEOTIDE SEQUENCE [LARGE SCALE GENOMIC DNA]</scope>
    <source>
        <strain>S88 / ExPEC</strain>
    </source>
</reference>
<accession>B7MLM2</accession>